<proteinExistence type="inferred from homology"/>
<feature type="chain" id="PRO_0000060612" description="Cytochrome b">
    <location>
        <begin position="1"/>
        <end position="380"/>
    </location>
</feature>
<feature type="transmembrane region" description="Helical" evidence="2">
    <location>
        <begin position="34"/>
        <end position="54"/>
    </location>
</feature>
<feature type="transmembrane region" description="Helical" evidence="2">
    <location>
        <begin position="78"/>
        <end position="99"/>
    </location>
</feature>
<feature type="transmembrane region" description="Helical" evidence="2">
    <location>
        <begin position="114"/>
        <end position="134"/>
    </location>
</feature>
<feature type="transmembrane region" description="Helical" evidence="2">
    <location>
        <begin position="179"/>
        <end position="199"/>
    </location>
</feature>
<feature type="transmembrane region" description="Helical" evidence="2">
    <location>
        <begin position="227"/>
        <end position="247"/>
    </location>
</feature>
<feature type="transmembrane region" description="Helical" evidence="2">
    <location>
        <begin position="289"/>
        <end position="309"/>
    </location>
</feature>
<feature type="transmembrane region" description="Helical" evidence="2">
    <location>
        <begin position="321"/>
        <end position="341"/>
    </location>
</feature>
<feature type="transmembrane region" description="Helical" evidence="2">
    <location>
        <begin position="348"/>
        <end position="368"/>
    </location>
</feature>
<feature type="binding site" description="axial binding residue" evidence="2">
    <location>
        <position position="84"/>
    </location>
    <ligand>
        <name>heme b</name>
        <dbReference type="ChEBI" id="CHEBI:60344"/>
        <label>b562</label>
    </ligand>
    <ligandPart>
        <name>Fe</name>
        <dbReference type="ChEBI" id="CHEBI:18248"/>
    </ligandPart>
</feature>
<feature type="binding site" description="axial binding residue" evidence="2">
    <location>
        <position position="98"/>
    </location>
    <ligand>
        <name>heme b</name>
        <dbReference type="ChEBI" id="CHEBI:60344"/>
        <label>b566</label>
    </ligand>
    <ligandPart>
        <name>Fe</name>
        <dbReference type="ChEBI" id="CHEBI:18248"/>
    </ligandPart>
</feature>
<feature type="binding site" description="axial binding residue" evidence="2">
    <location>
        <position position="183"/>
    </location>
    <ligand>
        <name>heme b</name>
        <dbReference type="ChEBI" id="CHEBI:60344"/>
        <label>b562</label>
    </ligand>
    <ligandPart>
        <name>Fe</name>
        <dbReference type="ChEBI" id="CHEBI:18248"/>
    </ligandPart>
</feature>
<feature type="binding site" description="axial binding residue" evidence="2">
    <location>
        <position position="197"/>
    </location>
    <ligand>
        <name>heme b</name>
        <dbReference type="ChEBI" id="CHEBI:60344"/>
        <label>b566</label>
    </ligand>
    <ligandPart>
        <name>Fe</name>
        <dbReference type="ChEBI" id="CHEBI:18248"/>
    </ligandPart>
</feature>
<feature type="binding site" evidence="2">
    <location>
        <position position="202"/>
    </location>
    <ligand>
        <name>a ubiquinone</name>
        <dbReference type="ChEBI" id="CHEBI:16389"/>
    </ligand>
</feature>
<geneLocation type="mitochondrion"/>
<name>CYB_APTPA</name>
<keyword id="KW-0249">Electron transport</keyword>
<keyword id="KW-0349">Heme</keyword>
<keyword id="KW-0408">Iron</keyword>
<keyword id="KW-0472">Membrane</keyword>
<keyword id="KW-0479">Metal-binding</keyword>
<keyword id="KW-0496">Mitochondrion</keyword>
<keyword id="KW-0999">Mitochondrion inner membrane</keyword>
<keyword id="KW-0679">Respiratory chain</keyword>
<keyword id="KW-0812">Transmembrane</keyword>
<keyword id="KW-1133">Transmembrane helix</keyword>
<keyword id="KW-0813">Transport</keyword>
<keyword id="KW-0830">Ubiquinone</keyword>
<reference key="1">
    <citation type="journal article" date="1998" name="Mol. Biol. Evol.">
        <title>Body size effects and rates of cytochrome-b evolution in tube-nosed seabirds.</title>
        <authorList>
            <person name="Nunn G.B."/>
            <person name="Stanley S.E."/>
        </authorList>
    </citation>
    <scope>NUCLEOTIDE SEQUENCE [GENOMIC DNA]</scope>
    <source>
        <strain>Isolate KingP-MI-1</strain>
    </source>
</reference>
<dbReference type="EMBL" id="AF076044">
    <property type="protein sequence ID" value="AAC68601.1"/>
    <property type="molecule type" value="Genomic_DNA"/>
</dbReference>
<dbReference type="SMR" id="O79195"/>
<dbReference type="GO" id="GO:0005743">
    <property type="term" value="C:mitochondrial inner membrane"/>
    <property type="evidence" value="ECO:0007669"/>
    <property type="project" value="UniProtKB-SubCell"/>
</dbReference>
<dbReference type="GO" id="GO:0045275">
    <property type="term" value="C:respiratory chain complex III"/>
    <property type="evidence" value="ECO:0007669"/>
    <property type="project" value="InterPro"/>
</dbReference>
<dbReference type="GO" id="GO:0046872">
    <property type="term" value="F:metal ion binding"/>
    <property type="evidence" value="ECO:0007669"/>
    <property type="project" value="UniProtKB-KW"/>
</dbReference>
<dbReference type="GO" id="GO:0008121">
    <property type="term" value="F:ubiquinol-cytochrome-c reductase activity"/>
    <property type="evidence" value="ECO:0007669"/>
    <property type="project" value="InterPro"/>
</dbReference>
<dbReference type="GO" id="GO:0006122">
    <property type="term" value="P:mitochondrial electron transport, ubiquinol to cytochrome c"/>
    <property type="evidence" value="ECO:0007669"/>
    <property type="project" value="TreeGrafter"/>
</dbReference>
<dbReference type="CDD" id="cd00290">
    <property type="entry name" value="cytochrome_b_C"/>
    <property type="match status" value="1"/>
</dbReference>
<dbReference type="CDD" id="cd00284">
    <property type="entry name" value="Cytochrome_b_N"/>
    <property type="match status" value="1"/>
</dbReference>
<dbReference type="FunFam" id="1.20.810.10:FF:000002">
    <property type="entry name" value="Cytochrome b"/>
    <property type="match status" value="1"/>
</dbReference>
<dbReference type="Gene3D" id="1.20.810.10">
    <property type="entry name" value="Cytochrome Bc1 Complex, Chain C"/>
    <property type="match status" value="1"/>
</dbReference>
<dbReference type="InterPro" id="IPR005798">
    <property type="entry name" value="Cyt_b/b6_C"/>
</dbReference>
<dbReference type="InterPro" id="IPR036150">
    <property type="entry name" value="Cyt_b/b6_C_sf"/>
</dbReference>
<dbReference type="InterPro" id="IPR005797">
    <property type="entry name" value="Cyt_b/b6_N"/>
</dbReference>
<dbReference type="InterPro" id="IPR027387">
    <property type="entry name" value="Cytb/b6-like_sf"/>
</dbReference>
<dbReference type="InterPro" id="IPR030689">
    <property type="entry name" value="Cytochrome_b"/>
</dbReference>
<dbReference type="InterPro" id="IPR048260">
    <property type="entry name" value="Cytochrome_b_C_euk/bac"/>
</dbReference>
<dbReference type="InterPro" id="IPR048259">
    <property type="entry name" value="Cytochrome_b_N_euk/bac"/>
</dbReference>
<dbReference type="InterPro" id="IPR016174">
    <property type="entry name" value="Di-haem_cyt_TM"/>
</dbReference>
<dbReference type="PANTHER" id="PTHR19271">
    <property type="entry name" value="CYTOCHROME B"/>
    <property type="match status" value="1"/>
</dbReference>
<dbReference type="PANTHER" id="PTHR19271:SF16">
    <property type="entry name" value="CYTOCHROME B"/>
    <property type="match status" value="1"/>
</dbReference>
<dbReference type="Pfam" id="PF00032">
    <property type="entry name" value="Cytochrom_B_C"/>
    <property type="match status" value="1"/>
</dbReference>
<dbReference type="Pfam" id="PF00033">
    <property type="entry name" value="Cytochrome_B"/>
    <property type="match status" value="1"/>
</dbReference>
<dbReference type="PIRSF" id="PIRSF038885">
    <property type="entry name" value="COB"/>
    <property type="match status" value="1"/>
</dbReference>
<dbReference type="SUPFAM" id="SSF81648">
    <property type="entry name" value="a domain/subunit of cytochrome bc1 complex (Ubiquinol-cytochrome c reductase)"/>
    <property type="match status" value="1"/>
</dbReference>
<dbReference type="SUPFAM" id="SSF81342">
    <property type="entry name" value="Transmembrane di-heme cytochromes"/>
    <property type="match status" value="1"/>
</dbReference>
<dbReference type="PROSITE" id="PS51003">
    <property type="entry name" value="CYTB_CTER"/>
    <property type="match status" value="1"/>
</dbReference>
<dbReference type="PROSITE" id="PS51002">
    <property type="entry name" value="CYTB_NTER"/>
    <property type="match status" value="1"/>
</dbReference>
<sequence>MAPNLRKSHPLLKMINNSLIDLPTPSNISAWWNFGSLLGICLTTQILTGLLLAMHYTADTTLAFSSVAHTCRNVQYGWLIRNLHANGASFFFICIYLHIGRGFYYGSYLYKETWNTGIILLLTLMATAFVGYVLPWGQMSFWGATVITNLFSAIPYIGQTLVEWAWGGFSVDNPTLTRFFALHFLLPFMIAGLTLIHLTFLHESGSNNPLGIVANSDKIPFHPYYSTKDTLGFALMLLPLTTLALFSPNLLGDPENFTPANPLVTPPHIKPEWYFLFAYAILRSIPNKLGGVLALAASVLILFLIPLLHKSKQRTMTFRPLSQLLFWTLVANLTILTWIGSQPVEHPFIIIGQLASLTYFTILLILFPLIGTLENKMLNH</sequence>
<comment type="function">
    <text evidence="2">Component of the ubiquinol-cytochrome c reductase complex (complex III or cytochrome b-c1 complex) that is part of the mitochondrial respiratory chain. The b-c1 complex mediates electron transfer from ubiquinol to cytochrome c. Contributes to the generation of a proton gradient across the mitochondrial membrane that is then used for ATP synthesis.</text>
</comment>
<comment type="cofactor">
    <cofactor evidence="2">
        <name>heme b</name>
        <dbReference type="ChEBI" id="CHEBI:60344"/>
    </cofactor>
    <text evidence="2">Binds 2 heme b groups non-covalently.</text>
</comment>
<comment type="subunit">
    <text evidence="2">The cytochrome bc1 complex contains 11 subunits: 3 respiratory subunits (MT-CYB, CYC1 and UQCRFS1), 2 core proteins (UQCRC1 and UQCRC2) and 6 low-molecular weight proteins (UQCRH/QCR6, UQCRB/QCR7, UQCRQ/QCR8, UQCR10/QCR9, UQCR11/QCR10 and a cleavage product of UQCRFS1). This cytochrome bc1 complex then forms a dimer.</text>
</comment>
<comment type="subcellular location">
    <subcellularLocation>
        <location evidence="2">Mitochondrion inner membrane</location>
        <topology evidence="2">Multi-pass membrane protein</topology>
    </subcellularLocation>
</comment>
<comment type="miscellaneous">
    <text evidence="1">Heme 1 (or BL or b562) is low-potential and absorbs at about 562 nm, and heme 2 (or BH or b566) is high-potential and absorbs at about 566 nm.</text>
</comment>
<comment type="similarity">
    <text evidence="3 4">Belongs to the cytochrome b family.</text>
</comment>
<comment type="caution">
    <text evidence="2">The full-length protein contains only eight transmembrane helices, not nine as predicted by bioinformatics tools.</text>
</comment>
<gene>
    <name type="primary">MT-CYB</name>
    <name type="synonym">COB</name>
    <name type="synonym">CYTB</name>
    <name type="synonym">MTCYB</name>
</gene>
<evidence type="ECO:0000250" key="1"/>
<evidence type="ECO:0000250" key="2">
    <source>
        <dbReference type="UniProtKB" id="P00157"/>
    </source>
</evidence>
<evidence type="ECO:0000255" key="3">
    <source>
        <dbReference type="PROSITE-ProRule" id="PRU00967"/>
    </source>
</evidence>
<evidence type="ECO:0000255" key="4">
    <source>
        <dbReference type="PROSITE-ProRule" id="PRU00968"/>
    </source>
</evidence>
<accession>O79195</accession>
<protein>
    <recommendedName>
        <fullName>Cytochrome b</fullName>
    </recommendedName>
    <alternativeName>
        <fullName>Complex III subunit 3</fullName>
    </alternativeName>
    <alternativeName>
        <fullName>Complex III subunit III</fullName>
    </alternativeName>
    <alternativeName>
        <fullName>Cytochrome b-c1 complex subunit 3</fullName>
    </alternativeName>
    <alternativeName>
        <fullName>Ubiquinol-cytochrome-c reductase complex cytochrome b subunit</fullName>
    </alternativeName>
</protein>
<organism>
    <name type="scientific">Aptenodytes patagonicus</name>
    <name type="common">King penguin</name>
    <dbReference type="NCBI Taxonomy" id="9234"/>
    <lineage>
        <taxon>Eukaryota</taxon>
        <taxon>Metazoa</taxon>
        <taxon>Chordata</taxon>
        <taxon>Craniata</taxon>
        <taxon>Vertebrata</taxon>
        <taxon>Euteleostomi</taxon>
        <taxon>Archelosauria</taxon>
        <taxon>Archosauria</taxon>
        <taxon>Dinosauria</taxon>
        <taxon>Saurischia</taxon>
        <taxon>Theropoda</taxon>
        <taxon>Coelurosauria</taxon>
        <taxon>Aves</taxon>
        <taxon>Neognathae</taxon>
        <taxon>Neoaves</taxon>
        <taxon>Aequornithes</taxon>
        <taxon>Sphenisciformes</taxon>
        <taxon>Spheniscidae</taxon>
        <taxon>Aptenodytes</taxon>
    </lineage>
</organism>